<proteinExistence type="inferred from homology"/>
<dbReference type="EC" id="2.7.7.6" evidence="1"/>
<dbReference type="EMBL" id="CP000927">
    <property type="protein sequence ID" value="ABZ69925.1"/>
    <property type="molecule type" value="Genomic_DNA"/>
</dbReference>
<dbReference type="SMR" id="B0SUP7"/>
<dbReference type="STRING" id="366602.Caul_0794"/>
<dbReference type="KEGG" id="cak:Caul_0794"/>
<dbReference type="eggNOG" id="COG0085">
    <property type="taxonomic scope" value="Bacteria"/>
</dbReference>
<dbReference type="HOGENOM" id="CLU_000524_4_0_5"/>
<dbReference type="OrthoDB" id="9803954at2"/>
<dbReference type="GO" id="GO:0000428">
    <property type="term" value="C:DNA-directed RNA polymerase complex"/>
    <property type="evidence" value="ECO:0007669"/>
    <property type="project" value="UniProtKB-KW"/>
</dbReference>
<dbReference type="GO" id="GO:0003677">
    <property type="term" value="F:DNA binding"/>
    <property type="evidence" value="ECO:0007669"/>
    <property type="project" value="UniProtKB-UniRule"/>
</dbReference>
<dbReference type="GO" id="GO:0003899">
    <property type="term" value="F:DNA-directed RNA polymerase activity"/>
    <property type="evidence" value="ECO:0007669"/>
    <property type="project" value="UniProtKB-UniRule"/>
</dbReference>
<dbReference type="GO" id="GO:0032549">
    <property type="term" value="F:ribonucleoside binding"/>
    <property type="evidence" value="ECO:0007669"/>
    <property type="project" value="InterPro"/>
</dbReference>
<dbReference type="GO" id="GO:0006351">
    <property type="term" value="P:DNA-templated transcription"/>
    <property type="evidence" value="ECO:0007669"/>
    <property type="project" value="UniProtKB-UniRule"/>
</dbReference>
<dbReference type="CDD" id="cd00653">
    <property type="entry name" value="RNA_pol_B_RPB2"/>
    <property type="match status" value="1"/>
</dbReference>
<dbReference type="FunFam" id="3.90.1800.10:FF:000001">
    <property type="entry name" value="DNA-directed RNA polymerase subunit beta"/>
    <property type="match status" value="1"/>
</dbReference>
<dbReference type="Gene3D" id="2.40.50.100">
    <property type="match status" value="1"/>
</dbReference>
<dbReference type="Gene3D" id="2.40.50.150">
    <property type="match status" value="1"/>
</dbReference>
<dbReference type="Gene3D" id="3.90.1100.10">
    <property type="match status" value="2"/>
</dbReference>
<dbReference type="Gene3D" id="2.30.150.10">
    <property type="entry name" value="DNA-directed RNA polymerase, beta subunit, external 1 domain"/>
    <property type="match status" value="1"/>
</dbReference>
<dbReference type="Gene3D" id="2.40.270.10">
    <property type="entry name" value="DNA-directed RNA polymerase, subunit 2, domain 6"/>
    <property type="match status" value="1"/>
</dbReference>
<dbReference type="Gene3D" id="3.90.1800.10">
    <property type="entry name" value="RNA polymerase alpha subunit dimerisation domain"/>
    <property type="match status" value="1"/>
</dbReference>
<dbReference type="Gene3D" id="3.90.1110.10">
    <property type="entry name" value="RNA polymerase Rpb2, domain 2"/>
    <property type="match status" value="1"/>
</dbReference>
<dbReference type="HAMAP" id="MF_01321">
    <property type="entry name" value="RNApol_bact_RpoB"/>
    <property type="match status" value="1"/>
</dbReference>
<dbReference type="InterPro" id="IPR042107">
    <property type="entry name" value="DNA-dir_RNA_pol_bsu_ext_1_sf"/>
</dbReference>
<dbReference type="InterPro" id="IPR019462">
    <property type="entry name" value="DNA-dir_RNA_pol_bsu_external_1"/>
</dbReference>
<dbReference type="InterPro" id="IPR015712">
    <property type="entry name" value="DNA-dir_RNA_pol_su2"/>
</dbReference>
<dbReference type="InterPro" id="IPR007120">
    <property type="entry name" value="DNA-dir_RNAP_su2_dom"/>
</dbReference>
<dbReference type="InterPro" id="IPR037033">
    <property type="entry name" value="DNA-dir_RNAP_su2_hyb_sf"/>
</dbReference>
<dbReference type="InterPro" id="IPR010243">
    <property type="entry name" value="RNA_pol_bsu_bac"/>
</dbReference>
<dbReference type="InterPro" id="IPR007121">
    <property type="entry name" value="RNA_pol_bsu_CS"/>
</dbReference>
<dbReference type="InterPro" id="IPR007644">
    <property type="entry name" value="RNA_pol_bsu_protrusion"/>
</dbReference>
<dbReference type="InterPro" id="IPR007642">
    <property type="entry name" value="RNA_pol_Rpb2_2"/>
</dbReference>
<dbReference type="InterPro" id="IPR037034">
    <property type="entry name" value="RNA_pol_Rpb2_2_sf"/>
</dbReference>
<dbReference type="InterPro" id="IPR007645">
    <property type="entry name" value="RNA_pol_Rpb2_3"/>
</dbReference>
<dbReference type="InterPro" id="IPR007641">
    <property type="entry name" value="RNA_pol_Rpb2_7"/>
</dbReference>
<dbReference type="InterPro" id="IPR014724">
    <property type="entry name" value="RNA_pol_RPB2_OB-fold"/>
</dbReference>
<dbReference type="NCBIfam" id="NF001616">
    <property type="entry name" value="PRK00405.1"/>
    <property type="match status" value="1"/>
</dbReference>
<dbReference type="NCBIfam" id="TIGR02013">
    <property type="entry name" value="rpoB"/>
    <property type="match status" value="1"/>
</dbReference>
<dbReference type="PANTHER" id="PTHR20856">
    <property type="entry name" value="DNA-DIRECTED RNA POLYMERASE I SUBUNIT 2"/>
    <property type="match status" value="1"/>
</dbReference>
<dbReference type="Pfam" id="PF04563">
    <property type="entry name" value="RNA_pol_Rpb2_1"/>
    <property type="match status" value="1"/>
</dbReference>
<dbReference type="Pfam" id="PF04561">
    <property type="entry name" value="RNA_pol_Rpb2_2"/>
    <property type="match status" value="2"/>
</dbReference>
<dbReference type="Pfam" id="PF04565">
    <property type="entry name" value="RNA_pol_Rpb2_3"/>
    <property type="match status" value="1"/>
</dbReference>
<dbReference type="Pfam" id="PF10385">
    <property type="entry name" value="RNA_pol_Rpb2_45"/>
    <property type="match status" value="1"/>
</dbReference>
<dbReference type="Pfam" id="PF00562">
    <property type="entry name" value="RNA_pol_Rpb2_6"/>
    <property type="match status" value="1"/>
</dbReference>
<dbReference type="Pfam" id="PF04560">
    <property type="entry name" value="RNA_pol_Rpb2_7"/>
    <property type="match status" value="1"/>
</dbReference>
<dbReference type="SUPFAM" id="SSF64484">
    <property type="entry name" value="beta and beta-prime subunits of DNA dependent RNA-polymerase"/>
    <property type="match status" value="1"/>
</dbReference>
<dbReference type="PROSITE" id="PS01166">
    <property type="entry name" value="RNA_POL_BETA"/>
    <property type="match status" value="1"/>
</dbReference>
<gene>
    <name evidence="1" type="primary">rpoB</name>
    <name type="ordered locus">Caul_0794</name>
</gene>
<comment type="function">
    <text evidence="1">DNA-dependent RNA polymerase catalyzes the transcription of DNA into RNA using the four ribonucleoside triphosphates as substrates.</text>
</comment>
<comment type="catalytic activity">
    <reaction evidence="1">
        <text>RNA(n) + a ribonucleoside 5'-triphosphate = RNA(n+1) + diphosphate</text>
        <dbReference type="Rhea" id="RHEA:21248"/>
        <dbReference type="Rhea" id="RHEA-COMP:14527"/>
        <dbReference type="Rhea" id="RHEA-COMP:17342"/>
        <dbReference type="ChEBI" id="CHEBI:33019"/>
        <dbReference type="ChEBI" id="CHEBI:61557"/>
        <dbReference type="ChEBI" id="CHEBI:140395"/>
        <dbReference type="EC" id="2.7.7.6"/>
    </reaction>
</comment>
<comment type="subunit">
    <text evidence="1">The RNAP catalytic core consists of 2 alpha, 1 beta, 1 beta' and 1 omega subunit. When a sigma factor is associated with the core the holoenzyme is formed, which can initiate transcription.</text>
</comment>
<comment type="similarity">
    <text evidence="1">Belongs to the RNA polymerase beta chain family.</text>
</comment>
<name>RPOB_CAUSK</name>
<reference key="1">
    <citation type="submission" date="2008-01" db="EMBL/GenBank/DDBJ databases">
        <title>Complete sequence of chromosome of Caulobacter sp. K31.</title>
        <authorList>
            <consortium name="US DOE Joint Genome Institute"/>
            <person name="Copeland A."/>
            <person name="Lucas S."/>
            <person name="Lapidus A."/>
            <person name="Barry K."/>
            <person name="Glavina del Rio T."/>
            <person name="Dalin E."/>
            <person name="Tice H."/>
            <person name="Pitluck S."/>
            <person name="Bruce D."/>
            <person name="Goodwin L."/>
            <person name="Thompson L.S."/>
            <person name="Brettin T."/>
            <person name="Detter J.C."/>
            <person name="Han C."/>
            <person name="Schmutz J."/>
            <person name="Larimer F."/>
            <person name="Land M."/>
            <person name="Hauser L."/>
            <person name="Kyrpides N."/>
            <person name="Kim E."/>
            <person name="Stephens C."/>
            <person name="Richardson P."/>
        </authorList>
    </citation>
    <scope>NUCLEOTIDE SEQUENCE [LARGE SCALE GENOMIC DNA]</scope>
    <source>
        <strain>K31</strain>
    </source>
</reference>
<keyword id="KW-0240">DNA-directed RNA polymerase</keyword>
<keyword id="KW-0548">Nucleotidyltransferase</keyword>
<keyword id="KW-0804">Transcription</keyword>
<keyword id="KW-0808">Transferase</keyword>
<feature type="chain" id="PRO_1000086364" description="DNA-directed RNA polymerase subunit beta">
    <location>
        <begin position="1"/>
        <end position="1360"/>
    </location>
</feature>
<organism>
    <name type="scientific">Caulobacter sp. (strain K31)</name>
    <dbReference type="NCBI Taxonomy" id="366602"/>
    <lineage>
        <taxon>Bacteria</taxon>
        <taxon>Pseudomonadati</taxon>
        <taxon>Pseudomonadota</taxon>
        <taxon>Alphaproteobacteria</taxon>
        <taxon>Caulobacterales</taxon>
        <taxon>Caulobacteraceae</taxon>
        <taxon>Caulobacter</taxon>
    </lineage>
</organism>
<accession>B0SUP7</accession>
<protein>
    <recommendedName>
        <fullName evidence="1">DNA-directed RNA polymerase subunit beta</fullName>
        <shortName evidence="1">RNAP subunit beta</shortName>
        <ecNumber evidence="1">2.7.7.6</ecNumber>
    </recommendedName>
    <alternativeName>
        <fullName evidence="1">RNA polymerase subunit beta</fullName>
    </alternativeName>
    <alternativeName>
        <fullName evidence="1">Transcriptase subunit beta</fullName>
    </alternativeName>
</protein>
<sequence length="1360" mass="151127">MAQSFTGKKRIRKSFGRIPEAVQMPNLIEVQRSSYEQFLQREVRPGVRKDEGIEAVFKSVFPIKDFNERAVLEYVSYEFEEPKYDVEECIQRDMTFAAPLKVKLRLIVFETEEETGARSVKDIKEQDVYMGDIPLMTDKGTFIVNGTERVIVSQMHRSPGVFFDHDKGKTHASGKLLFAARVIPYRGSWLDFEFDAKDVVYVRIDRRRKLPATTFLYALGMDGEEILTTFYDVVPFEKRTAAGAEGWATPYKPERWRGVKPEFALIDADSGEEVAAAGTKITARQAKKLADNGLKTLLLAPEALTGRYLARDAVNFETGEIYAEAGDELDVTSIEALAAQGFSTIDVLDIDHVTVGAYMRNTLRVDKNAVREDALFDIYRVMRPGEPPTVEAAEAMFKSLFFDAERYDLSAVGRVKMNMRLELDASDEMRVLRKEDVLAVLKLLVGLRDGRGEIDDIDNLGNRRVRSVGELLENQYRVGLLRMERAIKERMSSVDIDTVMPHDLINAKPAAASVREFFGSSQLSQFMDQTNPLSEITHKRRLSALGPGGLTRERAGFEVRDVHPTHYGRICPIETPEGPNIGLINSLATHARVNKYGFIESPYRRVADGKPLEEVVYMSAMEESKHVIAQSNIKVLNGEIVDDLVPGRINGEPTLLQKEQVDLMDVSPRQVVSVAAALIPFLENDDANRALMGSNMQRQAVPLVQSDAPLVGTGMEAVVARDSGAVVIAKRTGVVEQIDGTRIVVRATEETDAARSGVDIYRLSKFQRSNQSTCINQRPLVKVGDKISAGDIIADGPSTELGELALGRNALVAFMPWNGYNFEDSILISERIVRDDVFTSIHIEEFEVMARDTKLGPEEITRDIPNVGEEALRNLDEAGIVAIGAEVQPGDILVGKVTPKGESPMTPEEKLLRAIFGEKASDVRDTSLRLPPGVAGTIVDVRVFNRHGVDKDERALAIERAEIDRLGKDRDDEFAILNRNISGRLRELLIGNVALSGPKGLSRGQITAEGLAEVQPGLWWQIALEDEKAMGELESLRRLFDENRKRLDRRFEDKVDKLQRGDELPPGVMKMVKVFVAVKRKLQPGDKMAGRHGNKGVISRILPIEDMPFLADGTHVDVVLNPLGVPSRMNVGQIFETHLGWACAGLGKQITTLLEDWQAGGQKQALIDRLTEIYGPDEELPETEEELVELARNLGKGVPIATPVFDGARIGDIEDHLRMAGLDPSGQSILYDGQTGEQFKRPVTVGYIYMLKLHHLVDDKIHARSIGPYSLVTQQPLGGKAQFGGQRFGEMEVWALEAYGAAYTLQEMLTVKSDDVAGRTKVYESIVRGDDTFEAGIPESFNVLVKEMRSLGLNVELENS</sequence>
<evidence type="ECO:0000255" key="1">
    <source>
        <dbReference type="HAMAP-Rule" id="MF_01321"/>
    </source>
</evidence>